<comment type="function">
    <text evidence="1">Catalyzes the ATP-dependent conversion of 7-carboxy-7-deazaguanine (CDG) to 7-cyano-7-deazaguanine (preQ(0)).</text>
</comment>
<comment type="catalytic activity">
    <reaction evidence="1">
        <text>7-carboxy-7-deazaguanine + NH4(+) + ATP = 7-cyano-7-deazaguanine + ADP + phosphate + H2O + H(+)</text>
        <dbReference type="Rhea" id="RHEA:27982"/>
        <dbReference type="ChEBI" id="CHEBI:15377"/>
        <dbReference type="ChEBI" id="CHEBI:15378"/>
        <dbReference type="ChEBI" id="CHEBI:28938"/>
        <dbReference type="ChEBI" id="CHEBI:30616"/>
        <dbReference type="ChEBI" id="CHEBI:43474"/>
        <dbReference type="ChEBI" id="CHEBI:45075"/>
        <dbReference type="ChEBI" id="CHEBI:61036"/>
        <dbReference type="ChEBI" id="CHEBI:456216"/>
        <dbReference type="EC" id="6.3.4.20"/>
    </reaction>
</comment>
<comment type="cofactor">
    <cofactor evidence="1">
        <name>Zn(2+)</name>
        <dbReference type="ChEBI" id="CHEBI:29105"/>
    </cofactor>
    <text evidence="1">Binds 1 zinc ion per subunit.</text>
</comment>
<comment type="pathway">
    <text evidence="1">Purine metabolism; 7-cyano-7-deazaguanine biosynthesis.</text>
</comment>
<comment type="similarity">
    <text evidence="1">Belongs to the QueC family.</text>
</comment>
<accession>Q1LTK2</accession>
<sequence length="238" mass="26515">MPHNQQIKKTVVVFSGGQDSTTCLIQALTQYDQVYCITFDYGQRHRAEICIARRLTITLGAYDHQIIDTSALNVLAASSLTRENIIVPLAEKNHMNSSLSTFVPGRNIVFLTLAAIYAYQVKAEVIITGVCETDFSGYPDCREKFIQALNKAVNLGMAYNIHFISPLMWLNKAETWALADYYQKLDLVCNETLTCYNGIQGKGCGFCTSCSLRARGLETYKQQPKLTMSSLKAKTGLP</sequence>
<name>QUEC_BAUCH</name>
<evidence type="ECO:0000255" key="1">
    <source>
        <dbReference type="HAMAP-Rule" id="MF_01633"/>
    </source>
</evidence>
<keyword id="KW-0067">ATP-binding</keyword>
<keyword id="KW-0436">Ligase</keyword>
<keyword id="KW-0479">Metal-binding</keyword>
<keyword id="KW-0547">Nucleotide-binding</keyword>
<keyword id="KW-0671">Queuosine biosynthesis</keyword>
<keyword id="KW-1185">Reference proteome</keyword>
<keyword id="KW-0862">Zinc</keyword>
<protein>
    <recommendedName>
        <fullName evidence="1">7-cyano-7-deazaguanine synthase</fullName>
        <ecNumber evidence="1">6.3.4.20</ecNumber>
    </recommendedName>
    <alternativeName>
        <fullName evidence="1">7-cyano-7-carbaguanine synthase</fullName>
    </alternativeName>
    <alternativeName>
        <fullName evidence="1">PreQ(0) synthase</fullName>
    </alternativeName>
    <alternativeName>
        <fullName evidence="1">Queuosine biosynthesis protein QueC</fullName>
    </alternativeName>
</protein>
<feature type="chain" id="PRO_0000246806" description="7-cyano-7-deazaguanine synthase">
    <location>
        <begin position="1"/>
        <end position="238"/>
    </location>
</feature>
<feature type="binding site" evidence="1">
    <location>
        <begin position="14"/>
        <end position="24"/>
    </location>
    <ligand>
        <name>ATP</name>
        <dbReference type="ChEBI" id="CHEBI:30616"/>
    </ligand>
</feature>
<feature type="binding site" evidence="1">
    <location>
        <position position="195"/>
    </location>
    <ligand>
        <name>Zn(2+)</name>
        <dbReference type="ChEBI" id="CHEBI:29105"/>
    </ligand>
</feature>
<feature type="binding site" evidence="1">
    <location>
        <position position="204"/>
    </location>
    <ligand>
        <name>Zn(2+)</name>
        <dbReference type="ChEBI" id="CHEBI:29105"/>
    </ligand>
</feature>
<feature type="binding site" evidence="1">
    <location>
        <position position="207"/>
    </location>
    <ligand>
        <name>Zn(2+)</name>
        <dbReference type="ChEBI" id="CHEBI:29105"/>
    </ligand>
</feature>
<feature type="binding site" evidence="1">
    <location>
        <position position="210"/>
    </location>
    <ligand>
        <name>Zn(2+)</name>
        <dbReference type="ChEBI" id="CHEBI:29105"/>
    </ligand>
</feature>
<organism>
    <name type="scientific">Baumannia cicadellinicola subsp. Homalodisca coagulata</name>
    <dbReference type="NCBI Taxonomy" id="374463"/>
    <lineage>
        <taxon>Bacteria</taxon>
        <taxon>Pseudomonadati</taxon>
        <taxon>Pseudomonadota</taxon>
        <taxon>Gammaproteobacteria</taxon>
        <taxon>Candidatus Palibaumannia</taxon>
    </lineage>
</organism>
<reference key="1">
    <citation type="journal article" date="2006" name="PLoS Biol.">
        <title>Metabolic complementarity and genomics of the dual bacterial symbiosis of sharpshooters.</title>
        <authorList>
            <person name="Wu D."/>
            <person name="Daugherty S.C."/>
            <person name="Van Aken S.E."/>
            <person name="Pai G.H."/>
            <person name="Watkins K.L."/>
            <person name="Khouri H."/>
            <person name="Tallon L.J."/>
            <person name="Zaborsky J.M."/>
            <person name="Dunbar H.E."/>
            <person name="Tran P.L."/>
            <person name="Moran N.A."/>
            <person name="Eisen J.A."/>
        </authorList>
    </citation>
    <scope>NUCLEOTIDE SEQUENCE [LARGE SCALE GENOMIC DNA]</scope>
</reference>
<gene>
    <name evidence="1" type="primary">queC</name>
    <name type="ordered locus">BCI_0262</name>
</gene>
<dbReference type="EC" id="6.3.4.20" evidence="1"/>
<dbReference type="EMBL" id="CP000238">
    <property type="protein sequence ID" value="ABF13961.1"/>
    <property type="molecule type" value="Genomic_DNA"/>
</dbReference>
<dbReference type="SMR" id="Q1LTK2"/>
<dbReference type="STRING" id="374463.BCI_0262"/>
<dbReference type="KEGG" id="bci:BCI_0262"/>
<dbReference type="HOGENOM" id="CLU_081854_0_0_6"/>
<dbReference type="UniPathway" id="UPA00391"/>
<dbReference type="Proteomes" id="UP000002427">
    <property type="component" value="Chromosome"/>
</dbReference>
<dbReference type="GO" id="GO:0005524">
    <property type="term" value="F:ATP binding"/>
    <property type="evidence" value="ECO:0007669"/>
    <property type="project" value="UniProtKB-UniRule"/>
</dbReference>
<dbReference type="GO" id="GO:0016879">
    <property type="term" value="F:ligase activity, forming carbon-nitrogen bonds"/>
    <property type="evidence" value="ECO:0007669"/>
    <property type="project" value="UniProtKB-UniRule"/>
</dbReference>
<dbReference type="GO" id="GO:0008270">
    <property type="term" value="F:zinc ion binding"/>
    <property type="evidence" value="ECO:0007669"/>
    <property type="project" value="UniProtKB-UniRule"/>
</dbReference>
<dbReference type="GO" id="GO:0008616">
    <property type="term" value="P:queuosine biosynthetic process"/>
    <property type="evidence" value="ECO:0007669"/>
    <property type="project" value="UniProtKB-UniRule"/>
</dbReference>
<dbReference type="CDD" id="cd01995">
    <property type="entry name" value="QueC-like"/>
    <property type="match status" value="1"/>
</dbReference>
<dbReference type="Gene3D" id="3.40.50.620">
    <property type="entry name" value="HUPs"/>
    <property type="match status" value="1"/>
</dbReference>
<dbReference type="HAMAP" id="MF_01633">
    <property type="entry name" value="QueC"/>
    <property type="match status" value="1"/>
</dbReference>
<dbReference type="InterPro" id="IPR018317">
    <property type="entry name" value="QueC"/>
</dbReference>
<dbReference type="InterPro" id="IPR014729">
    <property type="entry name" value="Rossmann-like_a/b/a_fold"/>
</dbReference>
<dbReference type="NCBIfam" id="TIGR00364">
    <property type="entry name" value="7-cyano-7-deazaguanine synthase QueC"/>
    <property type="match status" value="1"/>
</dbReference>
<dbReference type="NCBIfam" id="NF008317">
    <property type="entry name" value="PRK11106.1"/>
    <property type="match status" value="1"/>
</dbReference>
<dbReference type="PANTHER" id="PTHR42914">
    <property type="entry name" value="7-CYANO-7-DEAZAGUANINE SYNTHASE"/>
    <property type="match status" value="1"/>
</dbReference>
<dbReference type="PANTHER" id="PTHR42914:SF1">
    <property type="entry name" value="7-CYANO-7-DEAZAGUANINE SYNTHASE"/>
    <property type="match status" value="1"/>
</dbReference>
<dbReference type="Pfam" id="PF06508">
    <property type="entry name" value="QueC"/>
    <property type="match status" value="1"/>
</dbReference>
<dbReference type="PIRSF" id="PIRSF006293">
    <property type="entry name" value="ExsB"/>
    <property type="match status" value="1"/>
</dbReference>
<dbReference type="SUPFAM" id="SSF52402">
    <property type="entry name" value="Adenine nucleotide alpha hydrolases-like"/>
    <property type="match status" value="1"/>
</dbReference>
<proteinExistence type="inferred from homology"/>